<organism>
    <name type="scientific">Homo sapiens</name>
    <name type="common">Human</name>
    <dbReference type="NCBI Taxonomy" id="9606"/>
    <lineage>
        <taxon>Eukaryota</taxon>
        <taxon>Metazoa</taxon>
        <taxon>Chordata</taxon>
        <taxon>Craniata</taxon>
        <taxon>Vertebrata</taxon>
        <taxon>Euteleostomi</taxon>
        <taxon>Mammalia</taxon>
        <taxon>Eutheria</taxon>
        <taxon>Euarchontoglires</taxon>
        <taxon>Primates</taxon>
        <taxon>Haplorrhini</taxon>
        <taxon>Catarrhini</taxon>
        <taxon>Hominidae</taxon>
        <taxon>Homo</taxon>
    </lineage>
</organism>
<reference key="1">
    <citation type="journal article" date="2004" name="Nat. Genet.">
        <title>Complete sequencing and characterization of 21,243 full-length human cDNAs.</title>
        <authorList>
            <person name="Ota T."/>
            <person name="Suzuki Y."/>
            <person name="Nishikawa T."/>
            <person name="Otsuki T."/>
            <person name="Sugiyama T."/>
            <person name="Irie R."/>
            <person name="Wakamatsu A."/>
            <person name="Hayashi K."/>
            <person name="Sato H."/>
            <person name="Nagai K."/>
            <person name="Kimura K."/>
            <person name="Makita H."/>
            <person name="Sekine M."/>
            <person name="Obayashi M."/>
            <person name="Nishi T."/>
            <person name="Shibahara T."/>
            <person name="Tanaka T."/>
            <person name="Ishii S."/>
            <person name="Yamamoto J."/>
            <person name="Saito K."/>
            <person name="Kawai Y."/>
            <person name="Isono Y."/>
            <person name="Nakamura Y."/>
            <person name="Nagahari K."/>
            <person name="Murakami K."/>
            <person name="Yasuda T."/>
            <person name="Iwayanagi T."/>
            <person name="Wagatsuma M."/>
            <person name="Shiratori A."/>
            <person name="Sudo H."/>
            <person name="Hosoiri T."/>
            <person name="Kaku Y."/>
            <person name="Kodaira H."/>
            <person name="Kondo H."/>
            <person name="Sugawara M."/>
            <person name="Takahashi M."/>
            <person name="Kanda K."/>
            <person name="Yokoi T."/>
            <person name="Furuya T."/>
            <person name="Kikkawa E."/>
            <person name="Omura Y."/>
            <person name="Abe K."/>
            <person name="Kamihara K."/>
            <person name="Katsuta N."/>
            <person name="Sato K."/>
            <person name="Tanikawa M."/>
            <person name="Yamazaki M."/>
            <person name="Ninomiya K."/>
            <person name="Ishibashi T."/>
            <person name="Yamashita H."/>
            <person name="Murakawa K."/>
            <person name="Fujimori K."/>
            <person name="Tanai H."/>
            <person name="Kimata M."/>
            <person name="Watanabe M."/>
            <person name="Hiraoka S."/>
            <person name="Chiba Y."/>
            <person name="Ishida S."/>
            <person name="Ono Y."/>
            <person name="Takiguchi S."/>
            <person name="Watanabe S."/>
            <person name="Yosida M."/>
            <person name="Hotuta T."/>
            <person name="Kusano J."/>
            <person name="Kanehori K."/>
            <person name="Takahashi-Fujii A."/>
            <person name="Hara H."/>
            <person name="Tanase T.-O."/>
            <person name="Nomura Y."/>
            <person name="Togiya S."/>
            <person name="Komai F."/>
            <person name="Hara R."/>
            <person name="Takeuchi K."/>
            <person name="Arita M."/>
            <person name="Imose N."/>
            <person name="Musashino K."/>
            <person name="Yuuki H."/>
            <person name="Oshima A."/>
            <person name="Sasaki N."/>
            <person name="Aotsuka S."/>
            <person name="Yoshikawa Y."/>
            <person name="Matsunawa H."/>
            <person name="Ichihara T."/>
            <person name="Shiohata N."/>
            <person name="Sano S."/>
            <person name="Moriya S."/>
            <person name="Momiyama H."/>
            <person name="Satoh N."/>
            <person name="Takami S."/>
            <person name="Terashima Y."/>
            <person name="Suzuki O."/>
            <person name="Nakagawa S."/>
            <person name="Senoh A."/>
            <person name="Mizoguchi H."/>
            <person name="Goto Y."/>
            <person name="Shimizu F."/>
            <person name="Wakebe H."/>
            <person name="Hishigaki H."/>
            <person name="Watanabe T."/>
            <person name="Sugiyama A."/>
            <person name="Takemoto M."/>
            <person name="Kawakami B."/>
            <person name="Yamazaki M."/>
            <person name="Watanabe K."/>
            <person name="Kumagai A."/>
            <person name="Itakura S."/>
            <person name="Fukuzumi Y."/>
            <person name="Fujimori Y."/>
            <person name="Komiyama M."/>
            <person name="Tashiro H."/>
            <person name="Tanigami A."/>
            <person name="Fujiwara T."/>
            <person name="Ono T."/>
            <person name="Yamada K."/>
            <person name="Fujii Y."/>
            <person name="Ozaki K."/>
            <person name="Hirao M."/>
            <person name="Ohmori Y."/>
            <person name="Kawabata A."/>
            <person name="Hikiji T."/>
            <person name="Kobatake N."/>
            <person name="Inagaki H."/>
            <person name="Ikema Y."/>
            <person name="Okamoto S."/>
            <person name="Okitani R."/>
            <person name="Kawakami T."/>
            <person name="Noguchi S."/>
            <person name="Itoh T."/>
            <person name="Shigeta K."/>
            <person name="Senba T."/>
            <person name="Matsumura K."/>
            <person name="Nakajima Y."/>
            <person name="Mizuno T."/>
            <person name="Morinaga M."/>
            <person name="Sasaki M."/>
            <person name="Togashi T."/>
            <person name="Oyama M."/>
            <person name="Hata H."/>
            <person name="Watanabe M."/>
            <person name="Komatsu T."/>
            <person name="Mizushima-Sugano J."/>
            <person name="Satoh T."/>
            <person name="Shirai Y."/>
            <person name="Takahashi Y."/>
            <person name="Nakagawa K."/>
            <person name="Okumura K."/>
            <person name="Nagase T."/>
            <person name="Nomura N."/>
            <person name="Kikuchi H."/>
            <person name="Masuho Y."/>
            <person name="Yamashita R."/>
            <person name="Nakai K."/>
            <person name="Yada T."/>
            <person name="Nakamura Y."/>
            <person name="Ohara O."/>
            <person name="Isogai T."/>
            <person name="Sugano S."/>
        </authorList>
    </citation>
    <scope>NUCLEOTIDE SEQUENCE [LARGE SCALE MRNA] (ISOFORMS 1 AND 2)</scope>
    <source>
        <tissue>Colon</tissue>
    </source>
</reference>
<reference key="2">
    <citation type="journal article" date="2004" name="Genome Res.">
        <title>The status, quality, and expansion of the NIH full-length cDNA project: the Mammalian Gene Collection (MGC).</title>
        <authorList>
            <consortium name="The MGC Project Team"/>
        </authorList>
    </citation>
    <scope>NUCLEOTIDE SEQUENCE [LARGE SCALE MRNA] (ISOFORMS 1 AND 2)</scope>
    <source>
        <tissue>Colon</tissue>
        <tissue>Lung</tissue>
    </source>
</reference>
<reference key="3">
    <citation type="journal article" date="2007" name="BMC Genomics">
        <title>The full-ORF clone resource of the German cDNA consortium.</title>
        <authorList>
            <person name="Bechtel S."/>
            <person name="Rosenfelder H."/>
            <person name="Duda A."/>
            <person name="Schmidt C.P."/>
            <person name="Ernst U."/>
            <person name="Wellenreuther R."/>
            <person name="Mehrle A."/>
            <person name="Schuster C."/>
            <person name="Bahr A."/>
            <person name="Bloecker H."/>
            <person name="Heubner D."/>
            <person name="Hoerlein A."/>
            <person name="Michel G."/>
            <person name="Wedler H."/>
            <person name="Koehrer K."/>
            <person name="Ottenwaelder B."/>
            <person name="Poustka A."/>
            <person name="Wiemann S."/>
            <person name="Schupp I."/>
        </authorList>
    </citation>
    <scope>NUCLEOTIDE SEQUENCE [LARGE SCALE MRNA] OF 80-497</scope>
    <source>
        <tissue>Melanoma</tissue>
    </source>
</reference>
<reference key="4">
    <citation type="journal article" date="2007" name="Int. J. Mol. Med.">
        <title>Oncogenic properties of a novel gene JK-1 located in chromosome 5p and its overexpression in human esophageal squamous cell carcinoma.</title>
        <authorList>
            <person name="Tang W.K."/>
            <person name="Chui C.H."/>
            <person name="Fatima S."/>
            <person name="Kok S.H."/>
            <person name="Pak K.C."/>
            <person name="Ou T.M."/>
            <person name="Hui K.S."/>
            <person name="Wong M.M."/>
            <person name="Wong J."/>
            <person name="Law S."/>
            <person name="Tsao S.W."/>
            <person name="Lam K.Y."/>
            <person name="Beh P.S."/>
            <person name="Srivastava G."/>
            <person name="Chan A.S."/>
            <person name="Ho K.P."/>
            <person name="Tang J.C."/>
        </authorList>
    </citation>
    <scope>TISSUE SPECIFICITY</scope>
</reference>
<reference key="5">
    <citation type="journal article" date="2009" name="Nat. Genet.">
        <title>Mutations in FAM134B, encoding a newly identified Golgi protein, cause severe sensory and autonomic neuropathy.</title>
        <authorList>
            <person name="Kurth I."/>
            <person name="Pamminger T."/>
            <person name="Hennings J.C."/>
            <person name="Soehendra D."/>
            <person name="Huebner A.K."/>
            <person name="Rotthier A."/>
            <person name="Baets J."/>
            <person name="Senderek J."/>
            <person name="Topaloglu H."/>
            <person name="Farrell S.A."/>
            <person name="Nuernberg G."/>
            <person name="Nurnberg P."/>
            <person name="De Jonghe P."/>
            <person name="Gal A."/>
            <person name="Kaether C."/>
            <person name="Timmerman V."/>
            <person name="Huebner C.A."/>
        </authorList>
    </citation>
    <scope>FUNCTION</scope>
    <scope>INVOLVEMENT IN HSAN2B</scope>
</reference>
<reference key="6">
    <citation type="journal article" date="2015" name="Nature">
        <title>Regulation of endoplasmic reticulum turnover by selective autophagy.</title>
        <authorList>
            <person name="Khaminets A."/>
            <person name="Heinrich T."/>
            <person name="Mari M."/>
            <person name="Grumati P."/>
            <person name="Huebner A.K."/>
            <person name="Akutsu M."/>
            <person name="Liebmann L."/>
            <person name="Stolz A."/>
            <person name="Nietzsche S."/>
            <person name="Koch N."/>
            <person name="Mauthe M."/>
            <person name="Katona I."/>
            <person name="Qualmann B."/>
            <person name="Weis J."/>
            <person name="Reggiori F."/>
            <person name="Kurth I."/>
            <person name="Huebner C.A."/>
            <person name="Dikic I."/>
        </authorList>
    </citation>
    <scope>FUNCTION</scope>
    <scope>INTERACTION WITH MAP1LC3A; MAP1LC3B; GABARAP; GABARAPL1 AND GABARAPL2</scope>
    <scope>SUBCELLULAR LOCATION</scope>
    <scope>TOPOLOGY</scope>
    <scope>DOMAIN</scope>
    <scope>MUTAGENESIS OF 453-ASP--LEU-458</scope>
</reference>
<reference key="7">
    <citation type="journal article" date="2020" name="EMBO J.">
        <title>FAM134B oligomerization drives endoplasmic reticulum membrane scission for ER-phagy.</title>
        <authorList>
            <person name="Jiang X."/>
            <person name="Wang X."/>
            <person name="Ding X."/>
            <person name="Du M."/>
            <person name="Li B."/>
            <person name="Weng X."/>
            <person name="Zhang J."/>
            <person name="Li L."/>
            <person name="Tian R."/>
            <person name="Zhu Q."/>
            <person name="Chen S."/>
            <person name="Wang L."/>
            <person name="Liu W."/>
            <person name="Fang L."/>
            <person name="Neculai D."/>
            <person name="Sun Q."/>
        </authorList>
    </citation>
    <scope>FUNCTION</scope>
    <scope>SUBUNIT</scope>
    <scope>DOMAIN</scope>
    <scope>PHOSPHORYLATION AT SER-149; SER-151 AND SER-153</scope>
    <scope>MUTAGENESIS OF SER-149; SER-151 AND SER-153</scope>
    <scope>CHARACTERIZATION OF VARIANT ARG-216</scope>
</reference>
<reference key="8">
    <citation type="journal article" date="2021" name="EMBO Rep.">
        <title>Role of FAM134 paralogues in endoplasmic reticulum remodeling, ER-phagy, and Collagen quality control.</title>
        <authorList>
            <person name="Reggio A."/>
            <person name="Buonomo V."/>
            <person name="Berkane R."/>
            <person name="Bhaskara R.M."/>
            <person name="Tellechea M."/>
            <person name="Peluso I."/>
            <person name="Polishchuk E."/>
            <person name="Di Lorenzo G."/>
            <person name="Cirillo C."/>
            <person name="Esposito M."/>
            <person name="Hussain A."/>
            <person name="Huebner A.K."/>
            <person name="Huebner C.A."/>
            <person name="Settembre C."/>
            <person name="Hummer G."/>
            <person name="Grumati P."/>
            <person name="Stolz A."/>
        </authorList>
    </citation>
    <scope>FUNCTION</scope>
    <scope>INTERACTION WITH MAP1LC3A; MAP1LC3B; MAP1LC3C; GABARAP; GABARAPL1 AND GABARAPL2</scope>
    <scope>MUTAGENESIS OF 455-PHE--LEU-458</scope>
</reference>
<reference key="9">
    <citation type="journal article" date="2022" name="Autophagy">
        <title>SARS-CoV-2 ORF3a induces RETREG1/FAM134B-dependent reticulophagy and triggers sequential ER stress and inflammatory responses during SARS-CoV-2 infection.</title>
        <authorList>
            <person name="Zhang X."/>
            <person name="Yang Z."/>
            <person name="Pan T."/>
            <person name="Long X."/>
            <person name="Sun Q."/>
            <person name="Wang P.H."/>
            <person name="Li X."/>
            <person name="Kuang E."/>
        </authorList>
    </citation>
    <scope>FUNCTION (MICROBIAL INFECTION)</scope>
    <scope>SUBCELLULAR LOCATION (MICROBIAL INFECTION)</scope>
</reference>
<reference evidence="18" key="10">
    <citation type="journal article" date="2020" name="Nat. Commun.">
        <title>Super-assembly of ER-phagy receptor Atg40 induces local ER remodeling at contacts with forming autophagosomal membranes.</title>
        <authorList>
            <person name="Mochida K."/>
            <person name="Yamasaki A."/>
            <person name="Matoba K."/>
            <person name="Kirisako H."/>
            <person name="Noda N.N."/>
            <person name="Nakatogawa H."/>
        </authorList>
    </citation>
    <scope>X-RAY CRYSTALLOGRAPHY (1.40 ANGSTROMS) OF 450-468 IN CHIMERIC CONSTRUCT WITH GABARAP</scope>
</reference>
<reference evidence="19" key="11">
    <citation type="journal article" date="2022" name="FEBS Open Bio">
        <title>The crystal structure of the FAM134B-GABARAP complex provides mechanistic insights into the selective binding of FAM134 to the GABARAP subfamily.</title>
        <authorList>
            <person name="Zhao J."/>
            <person name="Li Z."/>
            <person name="Li J."/>
        </authorList>
    </citation>
    <scope>X-RAY CRYSTALLOGRAPHY (2.84 ANGSTROMS) OF 451-476 IN COMPLEX WITH MOUSE GABARAP</scope>
    <scope>INTERACTION WITH GABARAP; GABARAPL1; MAP1LC3A AND MAP1LC3B</scope>
    <scope>DOMAIN</scope>
    <scope>MUTAGENESIS OF GLU-456; GLU-462; LEU-463 AND ILE-466</scope>
</reference>
<reference key="12">
    <citation type="journal article" date="2012" name="J. Neurol.">
        <title>Frequency of mutations in the genes associated with hereditary sensory and autonomic neuropathy in a UK cohort.</title>
        <authorList>
            <person name="Davidson G.L."/>
            <person name="Murphy S.M."/>
            <person name="Polke J.M."/>
            <person name="Laura M."/>
            <person name="Salih M.A."/>
            <person name="Muntoni F."/>
            <person name="Blake J."/>
            <person name="Brandner S."/>
            <person name="Davies N."/>
            <person name="Horvath R."/>
            <person name="Price S."/>
            <person name="Donaghy M."/>
            <person name="Roberts M."/>
            <person name="Foulds N."/>
            <person name="Ramdharry G."/>
            <person name="Soler D."/>
            <person name="Lunn M.P."/>
            <person name="Manji H."/>
            <person name="Davis M.B."/>
            <person name="Houlden H."/>
            <person name="Reilly M.M."/>
        </authorList>
    </citation>
    <scope>VARIANT ARG-216</scope>
</reference>
<accession>Q9H6L5</accession>
<accession>Q69YN8</accession>
<accession>Q9H6K6</accession>
<accession>Q9H764</accession>
<accession>Q9NXM8</accession>
<proteinExistence type="evidence at protein level"/>
<keyword id="KW-0002">3D-structure</keyword>
<keyword id="KW-0025">Alternative splicing</keyword>
<keyword id="KW-0072">Autophagy</keyword>
<keyword id="KW-0256">Endoplasmic reticulum</keyword>
<keyword id="KW-0333">Golgi apparatus</keyword>
<keyword id="KW-0472">Membrane</keyword>
<keyword id="KW-0523">Neurodegeneration</keyword>
<keyword id="KW-0622">Neuropathy</keyword>
<keyword id="KW-0597">Phosphoprotein</keyword>
<keyword id="KW-1267">Proteomics identification</keyword>
<keyword id="KW-1185">Reference proteome</keyword>
<keyword id="KW-0812">Transmembrane</keyword>
<keyword id="KW-1133">Transmembrane helix</keyword>
<name>RETR1_HUMAN</name>
<evidence type="ECO:0000250" key="1">
    <source>
        <dbReference type="UniProtKB" id="Q8VE91"/>
    </source>
</evidence>
<evidence type="ECO:0000255" key="2"/>
<evidence type="ECO:0000256" key="3">
    <source>
        <dbReference type="SAM" id="MobiDB-lite"/>
    </source>
</evidence>
<evidence type="ECO:0000269" key="4">
    <source>
    </source>
</evidence>
<evidence type="ECO:0000269" key="5">
    <source>
    </source>
</evidence>
<evidence type="ECO:0000269" key="6">
    <source>
    </source>
</evidence>
<evidence type="ECO:0000269" key="7">
    <source>
    </source>
</evidence>
<evidence type="ECO:0000269" key="8">
    <source>
    </source>
</evidence>
<evidence type="ECO:0000269" key="9">
    <source>
    </source>
</evidence>
<evidence type="ECO:0000269" key="10">
    <source>
    </source>
</evidence>
<evidence type="ECO:0000269" key="11">
    <source>
    </source>
</evidence>
<evidence type="ECO:0000303" key="12">
    <source>
    </source>
</evidence>
<evidence type="ECO:0000303" key="13">
    <source>
    </source>
</evidence>
<evidence type="ECO:0000303" key="14">
    <source>
    </source>
</evidence>
<evidence type="ECO:0000305" key="15"/>
<evidence type="ECO:0000305" key="16">
    <source>
    </source>
</evidence>
<evidence type="ECO:0000312" key="17">
    <source>
        <dbReference type="HGNC" id="HGNC:25964"/>
    </source>
</evidence>
<evidence type="ECO:0007744" key="18">
    <source>
        <dbReference type="PDB" id="7BRQ"/>
    </source>
</evidence>
<evidence type="ECO:0007744" key="19">
    <source>
        <dbReference type="PDB" id="7FB5"/>
    </source>
</evidence>
<evidence type="ECO:0007829" key="20">
    <source>
        <dbReference type="PDB" id="7BRQ"/>
    </source>
</evidence>
<comment type="function">
    <text evidence="1 5 7 9">Endoplasmic reticulum (ER)-anchored autophagy regulator which mediates ER delivery into lysosomes through sequestration into autophagosomes (PubMed:26040720, PubMed:31930741, PubMed:34338405). Promotes membrane remodeling and ER scission via its membrane bending capacity and targets the fragments into autophagosomes via interaction with ATG8 family proteins (PubMed:26040720, PubMed:31930741, PubMed:34338405). Active under basal conditions (PubMed:34338405). Required for collagen quality control in a LIR motif-dependent manner (By similarity). Required for long-term survival of nociceptive and autonomic ganglion neurons (PubMed:19838196, PubMed:26040720).</text>
</comment>
<comment type="function">
    <text evidence="11">(Microbial infection) During SARS-CoV-2 infection, RETREG1-mediated reticulophagy is promoted by SARS-CoV-2 ORF3A protein (PubMed:35239449). This induces endoplasmic reticulum stress and inflammatory responses and facilitates viral infection (PubMed:35239449).</text>
</comment>
<comment type="subunit">
    <text evidence="7 8 9 10">Homooligomer; oligomerization is enhanced following endoplasmic reticulum stress and is mediated by the reticulon homology domain (PubMed:31930741). Interacts with ATG8 family modifier proteins MAP1LC3A, MAP1LC3B, MAP1LC3C, GABARAP, GABARAPL1 and GABARAPL2 (PubMed:26040720, PubMed:34338405, PubMed:34854256). Shows higher affinity for GABARAPL1 than for MAP1LC3A or MAP1LC3B (PubMed:34854256).</text>
</comment>
<comment type="interaction">
    <interactant intactId="EBI-16159046">
        <id>Q9H6L5-1</id>
    </interactant>
    <interactant intactId="EBI-720116">
        <id>P60520</id>
        <label>GABARAPL2</label>
    </interactant>
    <organismsDiffer>false</organismsDiffer>
    <experiments>3</experiments>
</comment>
<comment type="interaction">
    <interactant intactId="EBI-16159046">
        <id>Q9H6L5-1</id>
    </interactant>
    <interactant intactId="EBI-16082793">
        <id>Q9H492-1</id>
        <label>MAP1LC3A</label>
    </interactant>
    <organismsDiffer>false</organismsDiffer>
    <experiments>2</experiments>
</comment>
<comment type="interaction">
    <interactant intactId="EBI-13382642">
        <id>Q9H6L5-2</id>
    </interactant>
    <interactant intactId="EBI-747185">
        <id>O95817</id>
        <label>BAG3</label>
    </interactant>
    <organismsDiffer>false</organismsDiffer>
    <experiments>3</experiments>
</comment>
<comment type="interaction">
    <interactant intactId="EBI-13382642">
        <id>Q9H6L5-2</id>
    </interactant>
    <interactant intactId="EBI-720116">
        <id>P60520</id>
        <label>GABARAPL2</label>
    </interactant>
    <organismsDiffer>false</organismsDiffer>
    <experiments>3</experiments>
</comment>
<comment type="subcellular location">
    <subcellularLocation>
        <location evidence="1">Golgi apparatus</location>
        <location evidence="1">cis-Golgi network membrane</location>
        <topology evidence="2">Multi-pass membrane protein</topology>
    </subcellularLocation>
    <subcellularLocation>
        <location evidence="7">Endoplasmic reticulum membrane</location>
        <topology evidence="2">Multi-pass membrane protein</topology>
    </subcellularLocation>
</comment>
<comment type="subcellular location">
    <subcellularLocation>
        <location evidence="11">Endoplasmic reticulum membrane</location>
        <topology evidence="2">Multi-pass membrane protein</topology>
    </subcellularLocation>
    <text evidence="11">(Microbial infection) Following SARS-CoV-2 infection, colocalizes with SARS-CoV-2 ORF3A protein at the endoplasmic reticulum.</text>
</comment>
<comment type="alternative products">
    <event type="alternative splicing"/>
    <isoform>
        <id>Q9H6L5-1</id>
        <name>1</name>
        <sequence type="displayed"/>
    </isoform>
    <isoform>
        <id>Q9H6L5-2</id>
        <name>2</name>
        <sequence type="described" ref="VSP_025685 VSP_025686"/>
    </isoform>
</comment>
<comment type="tissue specificity">
    <text evidence="4">Overexpressed in esophageal squamous cell carcinoma (PubMed:17487424).</text>
</comment>
<comment type="domain">
    <text evidence="5 7">The LIR motif interacts with ATG8 family proteins and is necessary to target the ER fragments to autophagosomes for subsequent lysosomal degradation.</text>
</comment>
<comment type="domain">
    <text evidence="7 8 15">The reticulon homology domain provides capacity to bend the membrane and promotes ER scission (PubMed:26040720, PubMed:31930741). It is required for homooligomerization (PubMed:31930741). This domain does not show relevant similarities with reticulon domains, preventing any domain predictions within the protein sequence.</text>
</comment>
<comment type="PTM">
    <text evidence="8">Phosphorylation at Ser-151 by CAMK2B enhances oligomerization and membrane scission and reticulophagy activity.</text>
</comment>
<comment type="disease" evidence="5">
    <disease id="DI-02529">
        <name>Neuropathy, hereditary sensory and autonomic, 2B</name>
        <acronym>HSAN2B</acronym>
        <description>A form of hereditary sensory and autonomic neuropathy, a genetically and clinically heterogeneous group of disorders characterized by degeneration of dorsal root and autonomic ganglion cells, and by sensory and/or autonomic abnormalities. HSAN2B is an autosomal recessive disorder characterized by impairment of pain, temperature and touch sensation. Onset occurs in the first or second decade, with impaired nociception and progressive mutilating ulceration of the hands and feet with osteomyelitis and acroosteolysis. Amputations of the hands and feet are common. Autonomic dysfunction includes hyperhidrosis, urinary incontinence, and slow pupillary light response.</description>
        <dbReference type="MIM" id="613115"/>
    </disease>
    <text>The disease is caused by variants affecting the gene represented in this entry.</text>
</comment>
<comment type="similarity">
    <text evidence="15">Belongs to the RETREG family.</text>
</comment>
<comment type="sequence caution" evidence="15">
    <conflict type="erroneous initiation">
        <sequence resource="EMBL-CDS" id="AAH30517"/>
    </conflict>
    <text>Truncated N-terminus.</text>
</comment>
<comment type="sequence caution" evidence="15">
    <conflict type="erroneous initiation">
        <sequence resource="EMBL-CDS" id="BAA90982"/>
    </conflict>
    <text>Truncated N-terminus.</text>
</comment>
<comment type="sequence caution" evidence="15">
    <conflict type="erroneous initiation">
        <sequence resource="EMBL-CDS" id="BAB15252"/>
    </conflict>
    <text>Truncated N-terminus.</text>
</comment>
<gene>
    <name evidence="17" type="primary">RETREG1</name>
    <name type="synonym">FAM134B</name>
    <name evidence="14" type="synonym">JK1</name>
</gene>
<feature type="chain" id="PRO_0000288466" description="Reticulophagy regulator 1">
    <location>
        <begin position="1"/>
        <end position="497"/>
    </location>
</feature>
<feature type="topological domain" description="Cytoplasmic" evidence="7">
    <location>
        <begin position="1"/>
        <end position="59"/>
    </location>
</feature>
<feature type="transmembrane region" description="Helical" evidence="2">
    <location>
        <begin position="60"/>
        <end position="80"/>
    </location>
</feature>
<feature type="topological domain" description="Lumenal" evidence="15">
    <location>
        <begin position="81"/>
        <end position="95"/>
    </location>
</feature>
<feature type="transmembrane region" description="Helical" evidence="2">
    <location>
        <begin position="96"/>
        <end position="116"/>
    </location>
</feature>
<feature type="topological domain" description="Cytoplasmic" evidence="15">
    <location>
        <begin position="117"/>
        <end position="118"/>
    </location>
</feature>
<feature type="transmembrane region" description="Helical" evidence="2">
    <location>
        <begin position="119"/>
        <end position="139"/>
    </location>
</feature>
<feature type="topological domain" description="Lumenal" evidence="15">
    <location>
        <begin position="140"/>
        <end position="208"/>
    </location>
</feature>
<feature type="transmembrane region" description="Helical" evidence="2">
    <location>
        <begin position="209"/>
        <end position="229"/>
    </location>
</feature>
<feature type="topological domain" description="Cytoplasmic" evidence="7">
    <location>
        <begin position="230"/>
        <end position="497"/>
    </location>
</feature>
<feature type="region of interest" description="Disordered" evidence="3">
    <location>
        <begin position="1"/>
        <end position="51"/>
    </location>
</feature>
<feature type="region of interest" description="Reticulon homology domain" evidence="16">
    <location>
        <begin position="84"/>
        <end position="233"/>
    </location>
</feature>
<feature type="region of interest" description="Disordered" evidence="3">
    <location>
        <begin position="319"/>
        <end position="365"/>
    </location>
</feature>
<feature type="region of interest" description="Disordered" evidence="3">
    <location>
        <begin position="377"/>
        <end position="396"/>
    </location>
</feature>
<feature type="region of interest" description="Disordered" evidence="3">
    <location>
        <begin position="436"/>
        <end position="455"/>
    </location>
</feature>
<feature type="region of interest" description="Disordered" evidence="3">
    <location>
        <begin position="468"/>
        <end position="497"/>
    </location>
</feature>
<feature type="short sequence motif" description="LIR motif" evidence="16">
    <location>
        <begin position="453"/>
        <end position="458"/>
    </location>
</feature>
<feature type="compositionally biased region" description="Low complexity" evidence="3">
    <location>
        <begin position="13"/>
        <end position="23"/>
    </location>
</feature>
<feature type="compositionally biased region" description="Polar residues" evidence="3">
    <location>
        <begin position="319"/>
        <end position="330"/>
    </location>
</feature>
<feature type="compositionally biased region" description="Basic and acidic residues" evidence="3">
    <location>
        <begin position="334"/>
        <end position="348"/>
    </location>
</feature>
<feature type="compositionally biased region" description="Basic and acidic residues" evidence="3">
    <location>
        <begin position="377"/>
        <end position="388"/>
    </location>
</feature>
<feature type="compositionally biased region" description="Acidic residues" evidence="3">
    <location>
        <begin position="443"/>
        <end position="455"/>
    </location>
</feature>
<feature type="compositionally biased region" description="Polar residues" evidence="3">
    <location>
        <begin position="471"/>
        <end position="490"/>
    </location>
</feature>
<feature type="modified residue" description="Phosphoserine" evidence="8">
    <location>
        <position position="149"/>
    </location>
</feature>
<feature type="modified residue" description="Phosphoserine; by CAMK2B" evidence="8">
    <location>
        <position position="151"/>
    </location>
</feature>
<feature type="modified residue" description="Phosphoserine" evidence="8">
    <location>
        <position position="153"/>
    </location>
</feature>
<feature type="splice variant" id="VSP_025685" description="In isoform 2." evidence="12 13">
    <location>
        <begin position="1"/>
        <end position="141"/>
    </location>
</feature>
<feature type="splice variant" id="VSP_025686" description="In isoform 2." evidence="12 13">
    <original>RGAQLWRSLSE</original>
    <variation>MPEGEDFGPGK</variation>
    <location>
        <begin position="142"/>
        <end position="152"/>
    </location>
</feature>
<feature type="sequence variant" id="VAR_068477" description="Found in a patient with HSAN2B; uncertain significance; dramatically enhances homooligomerization which results in aberrant endoplasmic reticulum scission and excessive reticulophagy; induces sensory neuron death in vitro; dbSNP:rs1579584286." evidence="6">
    <original>G</original>
    <variation>R</variation>
    <location>
        <position position="216"/>
    </location>
</feature>
<feature type="sequence variant" id="VAR_032422" description="In dbSNP:rs34432513.">
    <original>Q</original>
    <variation>E</variation>
    <location>
        <position position="379"/>
    </location>
</feature>
<feature type="mutagenesis site" description="Reduces self-association." evidence="8">
    <original>S</original>
    <variation>A</variation>
    <location>
        <position position="149"/>
    </location>
</feature>
<feature type="mutagenesis site" description="Phosphomimetic mutant which enhances self-association. Enhanced membrane scission activity; when associated with D-151 and D-153." evidence="8">
    <original>S</original>
    <variation>D</variation>
    <location>
        <position position="149"/>
    </location>
</feature>
<feature type="mutagenesis site" description="Abolishes phosphorylation and reduces self-association." evidence="8">
    <original>S</original>
    <variation>A</variation>
    <location>
        <position position="151"/>
    </location>
</feature>
<feature type="mutagenesis site" description="Phosphomimetic mutant which enhances self-association. Enhanced membrane scission activity; when associated with D-149 and D-153." evidence="8">
    <original>S</original>
    <variation>D</variation>
    <location>
        <position position="151"/>
    </location>
</feature>
<feature type="mutagenesis site" description="Reduces self-association." evidence="8">
    <original>S</original>
    <variation>A</variation>
    <location>
        <position position="153"/>
    </location>
</feature>
<feature type="mutagenesis site" description="Phosphomimetic mutant which enhances self-association. Enhanced membrane scission activity; when associated with D-149 and D-151." evidence="8">
    <original>S</original>
    <variation>D</variation>
    <location>
        <position position="153"/>
    </location>
</feature>
<feature type="mutagenesis site" description="Abolishes interaction with ATG8 family proteins." evidence="7">
    <original>DDFELL</original>
    <variation>AAAAAA</variation>
    <location>
        <begin position="453"/>
        <end position="458"/>
    </location>
</feature>
<feature type="mutagenesis site" description="Abolishes interaction with ATG8 family proteins and reduces endoplasmic reticulum branching." evidence="9">
    <original>FELL</original>
    <variation>AELA</variation>
    <location>
        <begin position="455"/>
        <end position="458"/>
    </location>
</feature>
<feature type="mutagenesis site" description="Severely impaired binding to GABARAP." evidence="10">
    <original>E</original>
    <variation>R</variation>
    <location>
        <position position="456"/>
    </location>
</feature>
<feature type="mutagenesis site" description="Severely impaired binding to GABARAP." evidence="10">
    <original>E</original>
    <variation>R</variation>
    <location>
        <position position="462"/>
    </location>
</feature>
<feature type="mutagenesis site" description="Mildly weakened binding to GABARAP." evidence="10">
    <original>L</original>
    <variation>Q</variation>
    <location>
        <position position="463"/>
    </location>
</feature>
<feature type="mutagenesis site" description="Mildly weakened binding to GABARAP." evidence="10">
    <original>I</original>
    <variation>Q</variation>
    <location>
        <position position="466"/>
    </location>
</feature>
<feature type="sequence conflict" description="In Ref. 1; BAB15252." evidence="15" ref="1">
    <original>S</original>
    <variation>G</variation>
    <location>
        <position position="382"/>
    </location>
</feature>
<feature type="helix" evidence="20">
    <location>
        <begin position="461"/>
        <end position="465"/>
    </location>
</feature>
<dbReference type="EMBL" id="AK000159">
    <property type="protein sequence ID" value="BAA90982.1"/>
    <property type="status" value="ALT_INIT"/>
    <property type="molecule type" value="mRNA"/>
</dbReference>
<dbReference type="EMBL" id="AK024920">
    <property type="protein sequence ID" value="BAB15034.1"/>
    <property type="molecule type" value="mRNA"/>
</dbReference>
<dbReference type="EMBL" id="AK025808">
    <property type="protein sequence ID" value="BAB15241.1"/>
    <property type="molecule type" value="mRNA"/>
</dbReference>
<dbReference type="EMBL" id="AK025832">
    <property type="protein sequence ID" value="BAB15252.1"/>
    <property type="status" value="ALT_INIT"/>
    <property type="molecule type" value="mRNA"/>
</dbReference>
<dbReference type="EMBL" id="BC030517">
    <property type="protein sequence ID" value="AAH30517.1"/>
    <property type="status" value="ALT_INIT"/>
    <property type="molecule type" value="mRNA"/>
</dbReference>
<dbReference type="EMBL" id="BC053326">
    <property type="protein sequence ID" value="AAH53326.1"/>
    <property type="molecule type" value="mRNA"/>
</dbReference>
<dbReference type="EMBL" id="BC073132">
    <property type="protein sequence ID" value="AAH73132.1"/>
    <property type="molecule type" value="mRNA"/>
</dbReference>
<dbReference type="EMBL" id="AL832438">
    <property type="protein sequence ID" value="CAH10610.1"/>
    <property type="molecule type" value="mRNA"/>
</dbReference>
<dbReference type="CCDS" id="CCDS43304.1">
    <molecule id="Q9H6L5-1"/>
</dbReference>
<dbReference type="CCDS" id="CCDS43305.1">
    <molecule id="Q9H6L5-2"/>
</dbReference>
<dbReference type="RefSeq" id="NP_001030022.1">
    <molecule id="Q9H6L5-1"/>
    <property type="nucleotide sequence ID" value="NM_001034850.3"/>
</dbReference>
<dbReference type="RefSeq" id="NP_061873.2">
    <molecule id="Q9H6L5-2"/>
    <property type="nucleotide sequence ID" value="NM_019000.4"/>
</dbReference>
<dbReference type="PDB" id="7BRQ">
    <property type="method" value="X-ray"/>
    <property type="resolution" value="1.40 A"/>
    <property type="chains" value="A=450-468"/>
</dbReference>
<dbReference type="PDB" id="7FB5">
    <property type="method" value="X-ray"/>
    <property type="resolution" value="2.84 A"/>
    <property type="chains" value="B=451-476"/>
</dbReference>
<dbReference type="PDBsum" id="7BRQ"/>
<dbReference type="PDBsum" id="7FB5"/>
<dbReference type="SMR" id="Q9H6L5"/>
<dbReference type="BioGRID" id="119969">
    <property type="interactions" value="84"/>
</dbReference>
<dbReference type="DIP" id="DIP-61577N"/>
<dbReference type="FunCoup" id="Q9H6L5">
    <property type="interactions" value="709"/>
</dbReference>
<dbReference type="IntAct" id="Q9H6L5">
    <property type="interactions" value="26"/>
</dbReference>
<dbReference type="MINT" id="Q9H6L5"/>
<dbReference type="STRING" id="9606.ENSP00000304642"/>
<dbReference type="TCDB" id="9.B.362.1.1">
    <property type="family name" value="the fam134 reticulon protein (fam134) family"/>
</dbReference>
<dbReference type="GlyGen" id="Q9H6L5">
    <property type="glycosylation" value="2 sites, 1 O-linked glycan (1 site)"/>
</dbReference>
<dbReference type="iPTMnet" id="Q9H6L5"/>
<dbReference type="PhosphoSitePlus" id="Q9H6L5"/>
<dbReference type="BioMuta" id="RETREG1"/>
<dbReference type="DMDM" id="74733613"/>
<dbReference type="jPOST" id="Q9H6L5"/>
<dbReference type="MassIVE" id="Q9H6L5"/>
<dbReference type="PaxDb" id="9606-ENSP00000304642"/>
<dbReference type="PeptideAtlas" id="Q9H6L5"/>
<dbReference type="ProteomicsDB" id="81002">
    <molecule id="Q9H6L5-1"/>
</dbReference>
<dbReference type="ProteomicsDB" id="81003">
    <molecule id="Q9H6L5-2"/>
</dbReference>
<dbReference type="Pumba" id="Q9H6L5"/>
<dbReference type="Antibodypedia" id="5201">
    <property type="antibodies" value="139 antibodies from 22 providers"/>
</dbReference>
<dbReference type="DNASU" id="54463"/>
<dbReference type="Ensembl" id="ENST00000306320.10">
    <molecule id="Q9H6L5-1"/>
    <property type="protein sequence ID" value="ENSP00000304642.9"/>
    <property type="gene ID" value="ENSG00000154153.15"/>
</dbReference>
<dbReference type="Ensembl" id="ENST00000399793.6">
    <molecule id="Q9H6L5-2"/>
    <property type="protein sequence ID" value="ENSP00000382691.2"/>
    <property type="gene ID" value="ENSG00000154153.15"/>
</dbReference>
<dbReference type="GeneID" id="54463"/>
<dbReference type="KEGG" id="hsa:54463"/>
<dbReference type="MANE-Select" id="ENST00000306320.10">
    <property type="protein sequence ID" value="ENSP00000304642.9"/>
    <property type="RefSeq nucleotide sequence ID" value="NM_001034850.3"/>
    <property type="RefSeq protein sequence ID" value="NP_001030022.1"/>
</dbReference>
<dbReference type="UCSC" id="uc003jfr.4">
    <molecule id="Q9H6L5-1"/>
    <property type="organism name" value="human"/>
</dbReference>
<dbReference type="AGR" id="HGNC:25964"/>
<dbReference type="CTD" id="54463"/>
<dbReference type="DisGeNET" id="54463"/>
<dbReference type="GeneCards" id="RETREG1"/>
<dbReference type="GeneReviews" id="RETREG1"/>
<dbReference type="HGNC" id="HGNC:25964">
    <property type="gene designation" value="RETREG1"/>
</dbReference>
<dbReference type="HPA" id="ENSG00000154153">
    <property type="expression patterns" value="Tissue enhanced (heart muscle, skeletal muscle)"/>
</dbReference>
<dbReference type="MalaCards" id="RETREG1"/>
<dbReference type="MIM" id="613114">
    <property type="type" value="gene"/>
</dbReference>
<dbReference type="MIM" id="613115">
    <property type="type" value="phenotype"/>
</dbReference>
<dbReference type="neXtProt" id="NX_Q9H6L5"/>
<dbReference type="OpenTargets" id="ENSG00000154153"/>
<dbReference type="Orphanet" id="970">
    <property type="disease" value="Hereditary sensory and autonomic neuropathy type 2"/>
</dbReference>
<dbReference type="PharmGKB" id="PA162386188"/>
<dbReference type="VEuPathDB" id="HostDB:ENSG00000154153"/>
<dbReference type="eggNOG" id="ENOG502QPW8">
    <property type="taxonomic scope" value="Eukaryota"/>
</dbReference>
<dbReference type="GeneTree" id="ENSGT00940000160746"/>
<dbReference type="HOGENOM" id="CLU_036265_0_0_1"/>
<dbReference type="InParanoid" id="Q9H6L5"/>
<dbReference type="OMA" id="IKGAQLW"/>
<dbReference type="OrthoDB" id="10029527at2759"/>
<dbReference type="PAN-GO" id="Q9H6L5">
    <property type="GO annotations" value="3 GO annotations based on evolutionary models"/>
</dbReference>
<dbReference type="PhylomeDB" id="Q9H6L5"/>
<dbReference type="TreeFam" id="TF329111"/>
<dbReference type="PathwayCommons" id="Q9H6L5"/>
<dbReference type="SignaLink" id="Q9H6L5"/>
<dbReference type="SIGNOR" id="Q9H6L5"/>
<dbReference type="BioGRID-ORCS" id="54463">
    <property type="hits" value="9 hits in 1146 CRISPR screens"/>
</dbReference>
<dbReference type="ChiTaRS" id="FAM134B">
    <property type="organism name" value="human"/>
</dbReference>
<dbReference type="GenomeRNAi" id="54463"/>
<dbReference type="Pharos" id="Q9H6L5">
    <property type="development level" value="Tbio"/>
</dbReference>
<dbReference type="PRO" id="PR:Q9H6L5"/>
<dbReference type="Proteomes" id="UP000005640">
    <property type="component" value="Chromosome 5"/>
</dbReference>
<dbReference type="RNAct" id="Q9H6L5">
    <property type="molecule type" value="protein"/>
</dbReference>
<dbReference type="Bgee" id="ENSG00000154153">
    <property type="expression patterns" value="Expressed in skeletal muscle tissue of rectus abdominis and 201 other cell types or tissues"/>
</dbReference>
<dbReference type="ExpressionAtlas" id="Q9H6L5">
    <property type="expression patterns" value="baseline and differential"/>
</dbReference>
<dbReference type="GO" id="GO:0005801">
    <property type="term" value="C:cis-Golgi network"/>
    <property type="evidence" value="ECO:0000250"/>
    <property type="project" value="UniProtKB"/>
</dbReference>
<dbReference type="GO" id="GO:0005783">
    <property type="term" value="C:endoplasmic reticulum"/>
    <property type="evidence" value="ECO:0000314"/>
    <property type="project" value="HPA"/>
</dbReference>
<dbReference type="GO" id="GO:0005789">
    <property type="term" value="C:endoplasmic reticulum membrane"/>
    <property type="evidence" value="ECO:0000314"/>
    <property type="project" value="GO_Central"/>
</dbReference>
<dbReference type="GO" id="GO:0016604">
    <property type="term" value="C:nuclear body"/>
    <property type="evidence" value="ECO:0000314"/>
    <property type="project" value="HPA"/>
</dbReference>
<dbReference type="GO" id="GO:0005730">
    <property type="term" value="C:nucleolus"/>
    <property type="evidence" value="ECO:0000314"/>
    <property type="project" value="HPA"/>
</dbReference>
<dbReference type="GO" id="GO:0140506">
    <property type="term" value="F:endoplasmic reticulum-autophagosome adaptor activity"/>
    <property type="evidence" value="ECO:0007669"/>
    <property type="project" value="Ensembl"/>
</dbReference>
<dbReference type="GO" id="GO:0030574">
    <property type="term" value="P:collagen catabolic process"/>
    <property type="evidence" value="ECO:0007669"/>
    <property type="project" value="Ensembl"/>
</dbReference>
<dbReference type="GO" id="GO:0007029">
    <property type="term" value="P:endoplasmic reticulum organization"/>
    <property type="evidence" value="ECO:0007669"/>
    <property type="project" value="Ensembl"/>
</dbReference>
<dbReference type="GO" id="GO:0000423">
    <property type="term" value="P:mitophagy"/>
    <property type="evidence" value="ECO:0007669"/>
    <property type="project" value="Ensembl"/>
</dbReference>
<dbReference type="GO" id="GO:0043524">
    <property type="term" value="P:negative regulation of neuron apoptotic process"/>
    <property type="evidence" value="ECO:0000315"/>
    <property type="project" value="GO_Central"/>
</dbReference>
<dbReference type="GO" id="GO:0061709">
    <property type="term" value="P:reticulophagy"/>
    <property type="evidence" value="ECO:0000315"/>
    <property type="project" value="UniProtKB"/>
</dbReference>
<dbReference type="GO" id="GO:0019233">
    <property type="term" value="P:sensory perception of pain"/>
    <property type="evidence" value="ECO:0000315"/>
    <property type="project" value="UniProtKB"/>
</dbReference>
<dbReference type="GO" id="GO:0050872">
    <property type="term" value="P:white fat cell differentiation"/>
    <property type="evidence" value="ECO:0007669"/>
    <property type="project" value="Ensembl"/>
</dbReference>
<dbReference type="CDD" id="cd22560">
    <property type="entry name" value="RETR1_RHD"/>
    <property type="match status" value="1"/>
</dbReference>
<dbReference type="InterPro" id="IPR055255">
    <property type="entry name" value="RETR1_RHD"/>
</dbReference>
<dbReference type="InterPro" id="IPR043384">
    <property type="entry name" value="RETREG1/3"/>
</dbReference>
<dbReference type="PANTHER" id="PTHR28659">
    <property type="entry name" value="RETICULON-LIKE PROTEIN"/>
    <property type="match status" value="1"/>
</dbReference>
<dbReference type="PANTHER" id="PTHR28659:SF3">
    <property type="entry name" value="RETICULOPHAGY REGULATOR 1"/>
    <property type="match status" value="1"/>
</dbReference>
<dbReference type="Pfam" id="PF24456">
    <property type="entry name" value="RHD_RETREG1-3"/>
    <property type="match status" value="1"/>
</dbReference>
<protein>
    <recommendedName>
        <fullName evidence="17">Reticulophagy regulator 1</fullName>
    </recommendedName>
    <alternativeName>
        <fullName evidence="15">Reticulophagy receptor 1</fullName>
    </alternativeName>
</protein>
<sequence>MASPAPPEHAEEGCPAPAAEEQAPPSPPPPQASPAERQQQEEEAQEAGAAEGAGLQVEEAAGRAAAAVTWLLGEPVLWLGCRADELLSWKRPLRSLLGFVAANLLFWFLALTPWRVYHLISVMILGRVIMQIIKDMVLSRTRGAQLWRSLSESWEVINSKPDERPRLSHCIAESWMNFSIFLQEMSLFKQQSPGKFCLLVCSVCTFFTILGSYIPGVILSYLLLLCAFLCPLFKCNDIGQKIYSKIKSVLLKLDFGIGEYINQKKRERSEADKEKSHKDDSELDFSALCPKISLTVAAKELSVSDTDVSEVSWTDNGTFNLSEGYTPQTDTSDDLDRPSEEVFSRDLSDFPSLENGMGTNDEDELSLGLPTELKRKKEQLDSGHRPSKETQSAAGLTLPLNSDQTFHLMSNLAGDVITAAVTAAIKDQLEGVQQALSQAAPIPEEDTDTEEGDDFELLDQSELDQIESELGLTQDQEAEAQQNKKSSGFLSNLLGGH</sequence>